<feature type="chain" id="PRO_1000021149" description="4-hydroxy-3-methylbut-2-enyl diphosphate reductase">
    <location>
        <begin position="1"/>
        <end position="333"/>
    </location>
</feature>
<feature type="active site" description="Proton donor" evidence="1">
    <location>
        <position position="134"/>
    </location>
</feature>
<feature type="binding site" evidence="1">
    <location>
        <position position="20"/>
    </location>
    <ligand>
        <name>[4Fe-4S] cluster</name>
        <dbReference type="ChEBI" id="CHEBI:49883"/>
    </ligand>
</feature>
<feature type="binding site" evidence="1">
    <location>
        <position position="49"/>
    </location>
    <ligand>
        <name>(2E)-4-hydroxy-3-methylbut-2-enyl diphosphate</name>
        <dbReference type="ChEBI" id="CHEBI:128753"/>
    </ligand>
</feature>
<feature type="binding site" evidence="1">
    <location>
        <position position="49"/>
    </location>
    <ligand>
        <name>dimethylallyl diphosphate</name>
        <dbReference type="ChEBI" id="CHEBI:57623"/>
    </ligand>
</feature>
<feature type="binding site" evidence="1">
    <location>
        <position position="49"/>
    </location>
    <ligand>
        <name>isopentenyl diphosphate</name>
        <dbReference type="ChEBI" id="CHEBI:128769"/>
    </ligand>
</feature>
<feature type="binding site" evidence="1">
    <location>
        <position position="82"/>
    </location>
    <ligand>
        <name>(2E)-4-hydroxy-3-methylbut-2-enyl diphosphate</name>
        <dbReference type="ChEBI" id="CHEBI:128753"/>
    </ligand>
</feature>
<feature type="binding site" evidence="1">
    <location>
        <position position="82"/>
    </location>
    <ligand>
        <name>dimethylallyl diphosphate</name>
        <dbReference type="ChEBI" id="CHEBI:57623"/>
    </ligand>
</feature>
<feature type="binding site" evidence="1">
    <location>
        <position position="82"/>
    </location>
    <ligand>
        <name>isopentenyl diphosphate</name>
        <dbReference type="ChEBI" id="CHEBI:128769"/>
    </ligand>
</feature>
<feature type="binding site" evidence="1">
    <location>
        <position position="104"/>
    </location>
    <ligand>
        <name>[4Fe-4S] cluster</name>
        <dbReference type="ChEBI" id="CHEBI:49883"/>
    </ligand>
</feature>
<feature type="binding site" evidence="1">
    <location>
        <position position="132"/>
    </location>
    <ligand>
        <name>(2E)-4-hydroxy-3-methylbut-2-enyl diphosphate</name>
        <dbReference type="ChEBI" id="CHEBI:128753"/>
    </ligand>
</feature>
<feature type="binding site" evidence="1">
    <location>
        <position position="132"/>
    </location>
    <ligand>
        <name>dimethylallyl diphosphate</name>
        <dbReference type="ChEBI" id="CHEBI:57623"/>
    </ligand>
</feature>
<feature type="binding site" evidence="1">
    <location>
        <position position="132"/>
    </location>
    <ligand>
        <name>isopentenyl diphosphate</name>
        <dbReference type="ChEBI" id="CHEBI:128769"/>
    </ligand>
</feature>
<feature type="binding site" evidence="1">
    <location>
        <position position="172"/>
    </location>
    <ligand>
        <name>(2E)-4-hydroxy-3-methylbut-2-enyl diphosphate</name>
        <dbReference type="ChEBI" id="CHEBI:128753"/>
    </ligand>
</feature>
<feature type="binding site" evidence="1">
    <location>
        <position position="202"/>
    </location>
    <ligand>
        <name>[4Fe-4S] cluster</name>
        <dbReference type="ChEBI" id="CHEBI:49883"/>
    </ligand>
</feature>
<feature type="binding site" evidence="1">
    <location>
        <position position="230"/>
    </location>
    <ligand>
        <name>(2E)-4-hydroxy-3-methylbut-2-enyl diphosphate</name>
        <dbReference type="ChEBI" id="CHEBI:128753"/>
    </ligand>
</feature>
<feature type="binding site" evidence="1">
    <location>
        <position position="230"/>
    </location>
    <ligand>
        <name>dimethylallyl diphosphate</name>
        <dbReference type="ChEBI" id="CHEBI:57623"/>
    </ligand>
</feature>
<feature type="binding site" evidence="1">
    <location>
        <position position="230"/>
    </location>
    <ligand>
        <name>isopentenyl diphosphate</name>
        <dbReference type="ChEBI" id="CHEBI:128769"/>
    </ligand>
</feature>
<feature type="binding site" evidence="1">
    <location>
        <position position="231"/>
    </location>
    <ligand>
        <name>(2E)-4-hydroxy-3-methylbut-2-enyl diphosphate</name>
        <dbReference type="ChEBI" id="CHEBI:128753"/>
    </ligand>
</feature>
<feature type="binding site" evidence="1">
    <location>
        <position position="231"/>
    </location>
    <ligand>
        <name>dimethylallyl diphosphate</name>
        <dbReference type="ChEBI" id="CHEBI:57623"/>
    </ligand>
</feature>
<feature type="binding site" evidence="1">
    <location>
        <position position="231"/>
    </location>
    <ligand>
        <name>isopentenyl diphosphate</name>
        <dbReference type="ChEBI" id="CHEBI:128769"/>
    </ligand>
</feature>
<feature type="binding site" evidence="1">
    <location>
        <position position="232"/>
    </location>
    <ligand>
        <name>(2E)-4-hydroxy-3-methylbut-2-enyl diphosphate</name>
        <dbReference type="ChEBI" id="CHEBI:128753"/>
    </ligand>
</feature>
<feature type="binding site" evidence="1">
    <location>
        <position position="232"/>
    </location>
    <ligand>
        <name>dimethylallyl diphosphate</name>
        <dbReference type="ChEBI" id="CHEBI:57623"/>
    </ligand>
</feature>
<feature type="binding site" evidence="1">
    <location>
        <position position="232"/>
    </location>
    <ligand>
        <name>isopentenyl diphosphate</name>
        <dbReference type="ChEBI" id="CHEBI:128769"/>
    </ligand>
</feature>
<feature type="binding site" evidence="1">
    <location>
        <position position="274"/>
    </location>
    <ligand>
        <name>(2E)-4-hydroxy-3-methylbut-2-enyl diphosphate</name>
        <dbReference type="ChEBI" id="CHEBI:128753"/>
    </ligand>
</feature>
<feature type="binding site" evidence="1">
    <location>
        <position position="274"/>
    </location>
    <ligand>
        <name>dimethylallyl diphosphate</name>
        <dbReference type="ChEBI" id="CHEBI:57623"/>
    </ligand>
</feature>
<feature type="binding site" evidence="1">
    <location>
        <position position="274"/>
    </location>
    <ligand>
        <name>isopentenyl diphosphate</name>
        <dbReference type="ChEBI" id="CHEBI:128769"/>
    </ligand>
</feature>
<evidence type="ECO:0000255" key="1">
    <source>
        <dbReference type="HAMAP-Rule" id="MF_00191"/>
    </source>
</evidence>
<comment type="function">
    <text evidence="1">Catalyzes the conversion of 1-hydroxy-2-methyl-2-(E)-butenyl 4-diphosphate (HMBPP) into a mixture of isopentenyl diphosphate (IPP) and dimethylallyl diphosphate (DMAPP). Acts in the terminal step of the DOXP/MEP pathway for isoprenoid precursor biosynthesis.</text>
</comment>
<comment type="catalytic activity">
    <reaction evidence="1">
        <text>isopentenyl diphosphate + 2 oxidized [2Fe-2S]-[ferredoxin] + H2O = (2E)-4-hydroxy-3-methylbut-2-enyl diphosphate + 2 reduced [2Fe-2S]-[ferredoxin] + 2 H(+)</text>
        <dbReference type="Rhea" id="RHEA:24488"/>
        <dbReference type="Rhea" id="RHEA-COMP:10000"/>
        <dbReference type="Rhea" id="RHEA-COMP:10001"/>
        <dbReference type="ChEBI" id="CHEBI:15377"/>
        <dbReference type="ChEBI" id="CHEBI:15378"/>
        <dbReference type="ChEBI" id="CHEBI:33737"/>
        <dbReference type="ChEBI" id="CHEBI:33738"/>
        <dbReference type="ChEBI" id="CHEBI:128753"/>
        <dbReference type="ChEBI" id="CHEBI:128769"/>
        <dbReference type="EC" id="1.17.7.4"/>
    </reaction>
</comment>
<comment type="catalytic activity">
    <reaction evidence="1">
        <text>dimethylallyl diphosphate + 2 oxidized [2Fe-2S]-[ferredoxin] + H2O = (2E)-4-hydroxy-3-methylbut-2-enyl diphosphate + 2 reduced [2Fe-2S]-[ferredoxin] + 2 H(+)</text>
        <dbReference type="Rhea" id="RHEA:24825"/>
        <dbReference type="Rhea" id="RHEA-COMP:10000"/>
        <dbReference type="Rhea" id="RHEA-COMP:10001"/>
        <dbReference type="ChEBI" id="CHEBI:15377"/>
        <dbReference type="ChEBI" id="CHEBI:15378"/>
        <dbReference type="ChEBI" id="CHEBI:33737"/>
        <dbReference type="ChEBI" id="CHEBI:33738"/>
        <dbReference type="ChEBI" id="CHEBI:57623"/>
        <dbReference type="ChEBI" id="CHEBI:128753"/>
        <dbReference type="EC" id="1.17.7.4"/>
    </reaction>
</comment>
<comment type="cofactor">
    <cofactor evidence="1">
        <name>[4Fe-4S] cluster</name>
        <dbReference type="ChEBI" id="CHEBI:49883"/>
    </cofactor>
    <text evidence="1">Binds 1 [4Fe-4S] cluster per subunit.</text>
</comment>
<comment type="pathway">
    <text evidence="1">Isoprenoid biosynthesis; dimethylallyl diphosphate biosynthesis; dimethylallyl diphosphate from (2E)-4-hydroxy-3-methylbutenyl diphosphate: step 1/1.</text>
</comment>
<comment type="pathway">
    <text evidence="1">Isoprenoid biosynthesis; isopentenyl diphosphate biosynthesis via DXP pathway; isopentenyl diphosphate from 1-deoxy-D-xylulose 5-phosphate: step 6/6.</text>
</comment>
<comment type="similarity">
    <text evidence="1">Belongs to the IspH family.</text>
</comment>
<gene>
    <name evidence="1" type="primary">ispH</name>
    <name type="ordered locus">Bpro_0951</name>
</gene>
<protein>
    <recommendedName>
        <fullName evidence="1">4-hydroxy-3-methylbut-2-enyl diphosphate reductase</fullName>
        <shortName evidence="1">HMBPP reductase</shortName>
        <ecNumber evidence="1">1.17.7.4</ecNumber>
    </recommendedName>
</protein>
<proteinExistence type="inferred from homology"/>
<reference key="1">
    <citation type="journal article" date="2008" name="Appl. Environ. Microbiol.">
        <title>The genome of Polaromonas sp. strain JS666: insights into the evolution of a hydrocarbon- and xenobiotic-degrading bacterium, and features of relevance to biotechnology.</title>
        <authorList>
            <person name="Mattes T.E."/>
            <person name="Alexander A.K."/>
            <person name="Richardson P.M."/>
            <person name="Munk A.C."/>
            <person name="Han C.S."/>
            <person name="Stothard P."/>
            <person name="Coleman N.V."/>
        </authorList>
    </citation>
    <scope>NUCLEOTIDE SEQUENCE [LARGE SCALE GENOMIC DNA]</scope>
    <source>
        <strain>JS666 / ATCC BAA-500</strain>
    </source>
</reference>
<name>ISPH_POLSJ</name>
<dbReference type="EC" id="1.17.7.4" evidence="1"/>
<dbReference type="EMBL" id="CP000316">
    <property type="protein sequence ID" value="ABE42907.1"/>
    <property type="molecule type" value="Genomic_DNA"/>
</dbReference>
<dbReference type="RefSeq" id="WP_011481909.1">
    <property type="nucleotide sequence ID" value="NC_007948.1"/>
</dbReference>
<dbReference type="SMR" id="Q12EY5"/>
<dbReference type="STRING" id="296591.Bpro_0951"/>
<dbReference type="KEGG" id="pol:Bpro_0951"/>
<dbReference type="eggNOG" id="COG0761">
    <property type="taxonomic scope" value="Bacteria"/>
</dbReference>
<dbReference type="HOGENOM" id="CLU_027486_1_0_4"/>
<dbReference type="OrthoDB" id="9804068at2"/>
<dbReference type="UniPathway" id="UPA00056">
    <property type="reaction ID" value="UER00097"/>
</dbReference>
<dbReference type="UniPathway" id="UPA00059">
    <property type="reaction ID" value="UER00105"/>
</dbReference>
<dbReference type="Proteomes" id="UP000001983">
    <property type="component" value="Chromosome"/>
</dbReference>
<dbReference type="GO" id="GO:0051539">
    <property type="term" value="F:4 iron, 4 sulfur cluster binding"/>
    <property type="evidence" value="ECO:0007669"/>
    <property type="project" value="UniProtKB-UniRule"/>
</dbReference>
<dbReference type="GO" id="GO:0051745">
    <property type="term" value="F:4-hydroxy-3-methylbut-2-enyl diphosphate reductase activity"/>
    <property type="evidence" value="ECO:0007669"/>
    <property type="project" value="UniProtKB-UniRule"/>
</dbReference>
<dbReference type="GO" id="GO:0046872">
    <property type="term" value="F:metal ion binding"/>
    <property type="evidence" value="ECO:0007669"/>
    <property type="project" value="UniProtKB-KW"/>
</dbReference>
<dbReference type="GO" id="GO:0050992">
    <property type="term" value="P:dimethylallyl diphosphate biosynthetic process"/>
    <property type="evidence" value="ECO:0007669"/>
    <property type="project" value="UniProtKB-UniRule"/>
</dbReference>
<dbReference type="GO" id="GO:0019288">
    <property type="term" value="P:isopentenyl diphosphate biosynthetic process, methylerythritol 4-phosphate pathway"/>
    <property type="evidence" value="ECO:0007669"/>
    <property type="project" value="UniProtKB-UniRule"/>
</dbReference>
<dbReference type="GO" id="GO:0016114">
    <property type="term" value="P:terpenoid biosynthetic process"/>
    <property type="evidence" value="ECO:0007669"/>
    <property type="project" value="UniProtKB-UniRule"/>
</dbReference>
<dbReference type="CDD" id="cd13944">
    <property type="entry name" value="lytB_ispH"/>
    <property type="match status" value="1"/>
</dbReference>
<dbReference type="Gene3D" id="3.40.50.11270">
    <property type="match status" value="1"/>
</dbReference>
<dbReference type="Gene3D" id="3.40.1010.20">
    <property type="entry name" value="4-hydroxy-3-methylbut-2-enyl diphosphate reductase, catalytic domain"/>
    <property type="match status" value="2"/>
</dbReference>
<dbReference type="HAMAP" id="MF_00191">
    <property type="entry name" value="IspH"/>
    <property type="match status" value="1"/>
</dbReference>
<dbReference type="InterPro" id="IPR003451">
    <property type="entry name" value="LytB/IspH"/>
</dbReference>
<dbReference type="NCBIfam" id="TIGR00216">
    <property type="entry name" value="ispH_lytB"/>
    <property type="match status" value="1"/>
</dbReference>
<dbReference type="NCBIfam" id="NF002188">
    <property type="entry name" value="PRK01045.1-2"/>
    <property type="match status" value="1"/>
</dbReference>
<dbReference type="NCBIfam" id="NF002190">
    <property type="entry name" value="PRK01045.1-4"/>
    <property type="match status" value="1"/>
</dbReference>
<dbReference type="PANTHER" id="PTHR30426">
    <property type="entry name" value="4-HYDROXY-3-METHYLBUT-2-ENYL DIPHOSPHATE REDUCTASE"/>
    <property type="match status" value="1"/>
</dbReference>
<dbReference type="PANTHER" id="PTHR30426:SF0">
    <property type="entry name" value="4-HYDROXY-3-METHYLBUT-2-ENYL DIPHOSPHATE REDUCTASE"/>
    <property type="match status" value="1"/>
</dbReference>
<dbReference type="Pfam" id="PF02401">
    <property type="entry name" value="LYTB"/>
    <property type="match status" value="1"/>
</dbReference>
<organism>
    <name type="scientific">Polaromonas sp. (strain JS666 / ATCC BAA-500)</name>
    <dbReference type="NCBI Taxonomy" id="296591"/>
    <lineage>
        <taxon>Bacteria</taxon>
        <taxon>Pseudomonadati</taxon>
        <taxon>Pseudomonadota</taxon>
        <taxon>Betaproteobacteria</taxon>
        <taxon>Burkholderiales</taxon>
        <taxon>Comamonadaceae</taxon>
        <taxon>Polaromonas</taxon>
    </lineage>
</organism>
<keyword id="KW-0004">4Fe-4S</keyword>
<keyword id="KW-0408">Iron</keyword>
<keyword id="KW-0411">Iron-sulfur</keyword>
<keyword id="KW-0414">Isoprene biosynthesis</keyword>
<keyword id="KW-0479">Metal-binding</keyword>
<keyword id="KW-0560">Oxidoreductase</keyword>
<keyword id="KW-1185">Reference proteome</keyword>
<sequence>MNTADKRLDEILLAEPRGFCAGVDRAIEIVERALTKFGAPIYVRHEIVHNTYVVNELKAKGAIFIEELSDVPPGATLVFSAHGVSKAIQDEARARGFQIFDATCPLVTKVHVEVAKLHKEGYEFIMIGHKGHPEVEGTMGQLDSGIHLVEDVADVARITPSQTERLAVVTQTTLSVDDAAEISAAVKARFPQVREPKQQDICYATQNRQDAVKVLSPQVDILIVVGSPTSSNSNRLRELAAKLGTEAYMVDDASELRESWFEGKSRVGLTAGASAPEILVKQVIDRIRALGAVSVRKMDGIEETIKFPLPKGLKVDAQGHMLDVGDSQLHQLT</sequence>
<accession>Q12EY5</accession>